<comment type="function">
    <text evidence="5">Protects DRG2 from proteolytic degradation.</text>
</comment>
<comment type="subunit">
    <text evidence="1 5">Interacts with androgen receptor (By similarity). Interacts with DRG2.</text>
</comment>
<comment type="similarity">
    <text evidence="6">Belongs to the RWDD1/GIR2 family.</text>
</comment>
<sequence length="243" mass="27785">MTDYGEEQRNELEALESIYPDSFTVLSESPPSFTITVTSEAGENDETVQTTLKFTYSEKYPDETPLYEIFSQENLEDNDVSDILKLLALQAEENLGMVMIFTLVTAVQEKLNEIVDQIKTRREEEKKQKEKEAEEAEKKLFHGTPVTIENFLSWKAKFDAELLEIKKKRMKEEEQAGKNKLSGKQLFETDHNLDTSDIQFLEDAGNNVEVDESLFQEMDDLELEDGEDDPDYNPVAPGSDSSD</sequence>
<gene>
    <name type="primary">Rwdd1</name>
    <name type="synonym">Dfrp2</name>
</gene>
<organism>
    <name type="scientific">Mus musculus</name>
    <name type="common">Mouse</name>
    <dbReference type="NCBI Taxonomy" id="10090"/>
    <lineage>
        <taxon>Eukaryota</taxon>
        <taxon>Metazoa</taxon>
        <taxon>Chordata</taxon>
        <taxon>Craniata</taxon>
        <taxon>Vertebrata</taxon>
        <taxon>Euteleostomi</taxon>
        <taxon>Mammalia</taxon>
        <taxon>Eutheria</taxon>
        <taxon>Euarchontoglires</taxon>
        <taxon>Glires</taxon>
        <taxon>Rodentia</taxon>
        <taxon>Myomorpha</taxon>
        <taxon>Muroidea</taxon>
        <taxon>Muridae</taxon>
        <taxon>Murinae</taxon>
        <taxon>Mus</taxon>
        <taxon>Mus</taxon>
    </lineage>
</organism>
<feature type="initiator methionine" description="Removed" evidence="2">
    <location>
        <position position="1"/>
    </location>
</feature>
<feature type="chain" id="PRO_0000097541" description="RWD domain-containing protein 1">
    <location>
        <begin position="2"/>
        <end position="243"/>
    </location>
</feature>
<feature type="domain" description="RWD" evidence="3">
    <location>
        <begin position="10"/>
        <end position="114"/>
    </location>
</feature>
<feature type="region of interest" description="Interaction with DRG2" evidence="5">
    <location>
        <begin position="142"/>
        <end position="197"/>
    </location>
</feature>
<feature type="region of interest" description="Disordered" evidence="4">
    <location>
        <begin position="208"/>
        <end position="243"/>
    </location>
</feature>
<feature type="compositionally biased region" description="Acidic residues" evidence="4">
    <location>
        <begin position="209"/>
        <end position="231"/>
    </location>
</feature>
<feature type="modified residue" description="N-acetylthreonine" evidence="2">
    <location>
        <position position="2"/>
    </location>
</feature>
<feature type="modified residue" description="Phosphothreonine" evidence="2">
    <location>
        <position position="144"/>
    </location>
</feature>
<name>RWDD1_MOUSE</name>
<protein>
    <recommendedName>
        <fullName>RWD domain-containing protein 1</fullName>
    </recommendedName>
    <alternativeName>
        <fullName>DRG family-regulatory protein 2</fullName>
    </alternativeName>
    <alternativeName>
        <fullName>IH1</fullName>
    </alternativeName>
</protein>
<keyword id="KW-0007">Acetylation</keyword>
<keyword id="KW-0597">Phosphoprotein</keyword>
<keyword id="KW-1185">Reference proteome</keyword>
<reference key="1">
    <citation type="submission" date="2002-04" db="EMBL/GenBank/DDBJ databases">
        <title>A novel gene associated with murine thymus atrophy.</title>
        <authorList>
            <person name="Li C."/>
            <person name="Li Y."/>
            <person name="He W."/>
        </authorList>
    </citation>
    <scope>NUCLEOTIDE SEQUENCE [MRNA]</scope>
    <source>
        <strain>BALB/cJ</strain>
        <tissue>Thymus</tissue>
    </source>
</reference>
<reference key="2">
    <citation type="journal article" date="2005" name="Science">
        <title>The transcriptional landscape of the mammalian genome.</title>
        <authorList>
            <person name="Carninci P."/>
            <person name="Kasukawa T."/>
            <person name="Katayama S."/>
            <person name="Gough J."/>
            <person name="Frith M.C."/>
            <person name="Maeda N."/>
            <person name="Oyama R."/>
            <person name="Ravasi T."/>
            <person name="Lenhard B."/>
            <person name="Wells C."/>
            <person name="Kodzius R."/>
            <person name="Shimokawa K."/>
            <person name="Bajic V.B."/>
            <person name="Brenner S.E."/>
            <person name="Batalov S."/>
            <person name="Forrest A.R."/>
            <person name="Zavolan M."/>
            <person name="Davis M.J."/>
            <person name="Wilming L.G."/>
            <person name="Aidinis V."/>
            <person name="Allen J.E."/>
            <person name="Ambesi-Impiombato A."/>
            <person name="Apweiler R."/>
            <person name="Aturaliya R.N."/>
            <person name="Bailey T.L."/>
            <person name="Bansal M."/>
            <person name="Baxter L."/>
            <person name="Beisel K.W."/>
            <person name="Bersano T."/>
            <person name="Bono H."/>
            <person name="Chalk A.M."/>
            <person name="Chiu K.P."/>
            <person name="Choudhary V."/>
            <person name="Christoffels A."/>
            <person name="Clutterbuck D.R."/>
            <person name="Crowe M.L."/>
            <person name="Dalla E."/>
            <person name="Dalrymple B.P."/>
            <person name="de Bono B."/>
            <person name="Della Gatta G."/>
            <person name="di Bernardo D."/>
            <person name="Down T."/>
            <person name="Engstrom P."/>
            <person name="Fagiolini M."/>
            <person name="Faulkner G."/>
            <person name="Fletcher C.F."/>
            <person name="Fukushima T."/>
            <person name="Furuno M."/>
            <person name="Futaki S."/>
            <person name="Gariboldi M."/>
            <person name="Georgii-Hemming P."/>
            <person name="Gingeras T.R."/>
            <person name="Gojobori T."/>
            <person name="Green R.E."/>
            <person name="Gustincich S."/>
            <person name="Harbers M."/>
            <person name="Hayashi Y."/>
            <person name="Hensch T.K."/>
            <person name="Hirokawa N."/>
            <person name="Hill D."/>
            <person name="Huminiecki L."/>
            <person name="Iacono M."/>
            <person name="Ikeo K."/>
            <person name="Iwama A."/>
            <person name="Ishikawa T."/>
            <person name="Jakt M."/>
            <person name="Kanapin A."/>
            <person name="Katoh M."/>
            <person name="Kawasawa Y."/>
            <person name="Kelso J."/>
            <person name="Kitamura H."/>
            <person name="Kitano H."/>
            <person name="Kollias G."/>
            <person name="Krishnan S.P."/>
            <person name="Kruger A."/>
            <person name="Kummerfeld S.K."/>
            <person name="Kurochkin I.V."/>
            <person name="Lareau L.F."/>
            <person name="Lazarevic D."/>
            <person name="Lipovich L."/>
            <person name="Liu J."/>
            <person name="Liuni S."/>
            <person name="McWilliam S."/>
            <person name="Madan Babu M."/>
            <person name="Madera M."/>
            <person name="Marchionni L."/>
            <person name="Matsuda H."/>
            <person name="Matsuzawa S."/>
            <person name="Miki H."/>
            <person name="Mignone F."/>
            <person name="Miyake S."/>
            <person name="Morris K."/>
            <person name="Mottagui-Tabar S."/>
            <person name="Mulder N."/>
            <person name="Nakano N."/>
            <person name="Nakauchi H."/>
            <person name="Ng P."/>
            <person name="Nilsson R."/>
            <person name="Nishiguchi S."/>
            <person name="Nishikawa S."/>
            <person name="Nori F."/>
            <person name="Ohara O."/>
            <person name="Okazaki Y."/>
            <person name="Orlando V."/>
            <person name="Pang K.C."/>
            <person name="Pavan W.J."/>
            <person name="Pavesi G."/>
            <person name="Pesole G."/>
            <person name="Petrovsky N."/>
            <person name="Piazza S."/>
            <person name="Reed J."/>
            <person name="Reid J.F."/>
            <person name="Ring B.Z."/>
            <person name="Ringwald M."/>
            <person name="Rost B."/>
            <person name="Ruan Y."/>
            <person name="Salzberg S.L."/>
            <person name="Sandelin A."/>
            <person name="Schneider C."/>
            <person name="Schoenbach C."/>
            <person name="Sekiguchi K."/>
            <person name="Semple C.A."/>
            <person name="Seno S."/>
            <person name="Sessa L."/>
            <person name="Sheng Y."/>
            <person name="Shibata Y."/>
            <person name="Shimada H."/>
            <person name="Shimada K."/>
            <person name="Silva D."/>
            <person name="Sinclair B."/>
            <person name="Sperling S."/>
            <person name="Stupka E."/>
            <person name="Sugiura K."/>
            <person name="Sultana R."/>
            <person name="Takenaka Y."/>
            <person name="Taki K."/>
            <person name="Tammoja K."/>
            <person name="Tan S.L."/>
            <person name="Tang S."/>
            <person name="Taylor M.S."/>
            <person name="Tegner J."/>
            <person name="Teichmann S.A."/>
            <person name="Ueda H.R."/>
            <person name="van Nimwegen E."/>
            <person name="Verardo R."/>
            <person name="Wei C.L."/>
            <person name="Yagi K."/>
            <person name="Yamanishi H."/>
            <person name="Zabarovsky E."/>
            <person name="Zhu S."/>
            <person name="Zimmer A."/>
            <person name="Hide W."/>
            <person name="Bult C."/>
            <person name="Grimmond S.M."/>
            <person name="Teasdale R.D."/>
            <person name="Liu E.T."/>
            <person name="Brusic V."/>
            <person name="Quackenbush J."/>
            <person name="Wahlestedt C."/>
            <person name="Mattick J.S."/>
            <person name="Hume D.A."/>
            <person name="Kai C."/>
            <person name="Sasaki D."/>
            <person name="Tomaru Y."/>
            <person name="Fukuda S."/>
            <person name="Kanamori-Katayama M."/>
            <person name="Suzuki M."/>
            <person name="Aoki J."/>
            <person name="Arakawa T."/>
            <person name="Iida J."/>
            <person name="Imamura K."/>
            <person name="Itoh M."/>
            <person name="Kato T."/>
            <person name="Kawaji H."/>
            <person name="Kawagashira N."/>
            <person name="Kawashima T."/>
            <person name="Kojima M."/>
            <person name="Kondo S."/>
            <person name="Konno H."/>
            <person name="Nakano K."/>
            <person name="Ninomiya N."/>
            <person name="Nishio T."/>
            <person name="Okada M."/>
            <person name="Plessy C."/>
            <person name="Shibata K."/>
            <person name="Shiraki T."/>
            <person name="Suzuki S."/>
            <person name="Tagami M."/>
            <person name="Waki K."/>
            <person name="Watahiki A."/>
            <person name="Okamura-Oho Y."/>
            <person name="Suzuki H."/>
            <person name="Kawai J."/>
            <person name="Hayashizaki Y."/>
        </authorList>
    </citation>
    <scope>NUCLEOTIDE SEQUENCE [LARGE SCALE MRNA]</scope>
    <source>
        <strain>C57BL/6J</strain>
        <tissue>Cerebellum</tissue>
        <tissue>Embryo</tissue>
    </source>
</reference>
<reference key="3">
    <citation type="journal article" date="2004" name="Genome Res.">
        <title>The status, quality, and expansion of the NIH full-length cDNA project: the Mammalian Gene Collection (MGC).</title>
        <authorList>
            <consortium name="The MGC Project Team"/>
        </authorList>
    </citation>
    <scope>NUCLEOTIDE SEQUENCE [LARGE SCALE MRNA]</scope>
    <source>
        <tissue>Limb</tissue>
    </source>
</reference>
<reference key="4">
    <citation type="journal article" date="2005" name="Genes Cells">
        <title>Identification of DRG family regulatory proteins (DFRPs): specific regulation of DRG1 and DRG2.</title>
        <authorList>
            <person name="Ishikawa K."/>
            <person name="Azuma S."/>
            <person name="Ikawa S."/>
            <person name="Semba K."/>
            <person name="Inoue J."/>
        </authorList>
    </citation>
    <scope>INTERACTION WITH DRG2</scope>
    <scope>FUNCTION</scope>
</reference>
<reference key="5">
    <citation type="journal article" date="2010" name="Cell">
        <title>A tissue-specific atlas of mouse protein phosphorylation and expression.</title>
        <authorList>
            <person name="Huttlin E.L."/>
            <person name="Jedrychowski M.P."/>
            <person name="Elias J.E."/>
            <person name="Goswami T."/>
            <person name="Rad R."/>
            <person name="Beausoleil S.A."/>
            <person name="Villen J."/>
            <person name="Haas W."/>
            <person name="Sowa M.E."/>
            <person name="Gygi S.P."/>
        </authorList>
    </citation>
    <scope>IDENTIFICATION BY MASS SPECTROMETRY [LARGE SCALE ANALYSIS]</scope>
    <source>
        <tissue>Brain</tissue>
        <tissue>Brown adipose tissue</tissue>
        <tissue>Heart</tissue>
        <tissue>Kidney</tissue>
        <tissue>Liver</tissue>
        <tissue>Lung</tissue>
        <tissue>Pancreas</tissue>
        <tissue>Spleen</tissue>
        <tissue>Testis</tissue>
    </source>
</reference>
<evidence type="ECO:0000250" key="1"/>
<evidence type="ECO:0000250" key="2">
    <source>
        <dbReference type="UniProtKB" id="Q9H446"/>
    </source>
</evidence>
<evidence type="ECO:0000255" key="3">
    <source>
        <dbReference type="PROSITE-ProRule" id="PRU00179"/>
    </source>
</evidence>
<evidence type="ECO:0000256" key="4">
    <source>
        <dbReference type="SAM" id="MobiDB-lite"/>
    </source>
</evidence>
<evidence type="ECO:0000269" key="5">
    <source>
    </source>
</evidence>
<evidence type="ECO:0000305" key="6"/>
<accession>Q9CQK7</accession>
<proteinExistence type="evidence at protein level"/>
<dbReference type="EMBL" id="AF503942">
    <property type="protein sequence ID" value="AAM27457.1"/>
    <property type="molecule type" value="mRNA"/>
</dbReference>
<dbReference type="EMBL" id="AK003262">
    <property type="protein sequence ID" value="BAB22678.2"/>
    <property type="status" value="ALT_SEQ"/>
    <property type="molecule type" value="mRNA"/>
</dbReference>
<dbReference type="EMBL" id="AK005278">
    <property type="protein sequence ID" value="BAB23927.1"/>
    <property type="molecule type" value="mRNA"/>
</dbReference>
<dbReference type="EMBL" id="AK011277">
    <property type="protein sequence ID" value="BAB27511.1"/>
    <property type="molecule type" value="mRNA"/>
</dbReference>
<dbReference type="EMBL" id="BC062136">
    <property type="protein sequence ID" value="AAH62136.1"/>
    <property type="molecule type" value="mRNA"/>
</dbReference>
<dbReference type="CCDS" id="CCDS23773.1"/>
<dbReference type="RefSeq" id="NP_079890.1">
    <property type="nucleotide sequence ID" value="NM_025614.3"/>
</dbReference>
<dbReference type="BMRB" id="Q9CQK7"/>
<dbReference type="SMR" id="Q9CQK7"/>
<dbReference type="BioGRID" id="211532">
    <property type="interactions" value="3"/>
</dbReference>
<dbReference type="CORUM" id="Q9CQK7"/>
<dbReference type="FunCoup" id="Q9CQK7">
    <property type="interactions" value="2030"/>
</dbReference>
<dbReference type="IntAct" id="Q9CQK7">
    <property type="interactions" value="1"/>
</dbReference>
<dbReference type="MINT" id="Q9CQK7"/>
<dbReference type="STRING" id="10090.ENSMUSP00000019917"/>
<dbReference type="iPTMnet" id="Q9CQK7"/>
<dbReference type="PhosphoSitePlus" id="Q9CQK7"/>
<dbReference type="PaxDb" id="10090-ENSMUSP00000019917"/>
<dbReference type="PeptideAtlas" id="Q9CQK7"/>
<dbReference type="ProteomicsDB" id="260960"/>
<dbReference type="Pumba" id="Q9CQK7"/>
<dbReference type="Antibodypedia" id="32499">
    <property type="antibodies" value="124 antibodies from 23 providers"/>
</dbReference>
<dbReference type="DNASU" id="66521"/>
<dbReference type="Ensembl" id="ENSMUST00000019917.6">
    <property type="protein sequence ID" value="ENSMUSP00000019917.6"/>
    <property type="gene ID" value="ENSMUSG00000019782.11"/>
</dbReference>
<dbReference type="GeneID" id="66521"/>
<dbReference type="KEGG" id="mmu:66521"/>
<dbReference type="UCSC" id="uc007eun.1">
    <property type="organism name" value="mouse"/>
</dbReference>
<dbReference type="AGR" id="MGI:1913771"/>
<dbReference type="CTD" id="51389"/>
<dbReference type="MGI" id="MGI:1913771">
    <property type="gene designation" value="Rwdd1"/>
</dbReference>
<dbReference type="VEuPathDB" id="HostDB:ENSMUSG00000019782"/>
<dbReference type="eggNOG" id="KOG4018">
    <property type="taxonomic scope" value="Eukaryota"/>
</dbReference>
<dbReference type="GeneTree" id="ENSGT00390000009168"/>
<dbReference type="HOGENOM" id="CLU_084528_2_0_1"/>
<dbReference type="InParanoid" id="Q9CQK7"/>
<dbReference type="OMA" id="QWDEHKK"/>
<dbReference type="OrthoDB" id="277175at2759"/>
<dbReference type="PhylomeDB" id="Q9CQK7"/>
<dbReference type="TreeFam" id="TF313662"/>
<dbReference type="Reactome" id="R-MMU-9629569">
    <property type="pathway name" value="Protein hydroxylation"/>
</dbReference>
<dbReference type="BioGRID-ORCS" id="66521">
    <property type="hits" value="5 hits in 77 CRISPR screens"/>
</dbReference>
<dbReference type="ChiTaRS" id="Rwdd1">
    <property type="organism name" value="mouse"/>
</dbReference>
<dbReference type="PRO" id="PR:Q9CQK7"/>
<dbReference type="Proteomes" id="UP000000589">
    <property type="component" value="Chromosome 10"/>
</dbReference>
<dbReference type="RNAct" id="Q9CQK7">
    <property type="molecule type" value="protein"/>
</dbReference>
<dbReference type="Bgee" id="ENSMUSG00000019782">
    <property type="expression patterns" value="Expressed in hindlimb stylopod muscle and 63 other cell types or tissues"/>
</dbReference>
<dbReference type="GO" id="GO:0005737">
    <property type="term" value="C:cytoplasm"/>
    <property type="evidence" value="ECO:0000314"/>
    <property type="project" value="CAFA"/>
</dbReference>
<dbReference type="GO" id="GO:0030521">
    <property type="term" value="P:androgen receptor signaling pathway"/>
    <property type="evidence" value="ECO:0000315"/>
    <property type="project" value="CAFA"/>
</dbReference>
<dbReference type="GO" id="GO:0034599">
    <property type="term" value="P:cellular response to oxidative stress"/>
    <property type="evidence" value="ECO:0000314"/>
    <property type="project" value="CAFA"/>
</dbReference>
<dbReference type="GO" id="GO:0071394">
    <property type="term" value="P:cellular response to testosterone stimulus"/>
    <property type="evidence" value="ECO:0000315"/>
    <property type="project" value="CAFA"/>
</dbReference>
<dbReference type="GO" id="GO:2000825">
    <property type="term" value="P:positive regulation of androgen receptor activity"/>
    <property type="evidence" value="ECO:0000315"/>
    <property type="project" value="CAFA"/>
</dbReference>
<dbReference type="CDD" id="cd23816">
    <property type="entry name" value="RWD_RWDD1"/>
    <property type="match status" value="1"/>
</dbReference>
<dbReference type="DisProt" id="DP00587"/>
<dbReference type="FunFam" id="3.10.110.10:FF:000064">
    <property type="entry name" value="RWD domain-containing protein 1"/>
    <property type="match status" value="1"/>
</dbReference>
<dbReference type="Gene3D" id="6.20.400.10">
    <property type="match status" value="1"/>
</dbReference>
<dbReference type="Gene3D" id="3.10.110.10">
    <property type="entry name" value="Ubiquitin Conjugating Enzyme"/>
    <property type="match status" value="1"/>
</dbReference>
<dbReference type="InterPro" id="IPR040213">
    <property type="entry name" value="GIR2-like"/>
</dbReference>
<dbReference type="InterPro" id="IPR006575">
    <property type="entry name" value="RWD_dom"/>
</dbReference>
<dbReference type="InterPro" id="IPR016135">
    <property type="entry name" value="UBQ-conjugating_enzyme/RWD"/>
</dbReference>
<dbReference type="InterPro" id="IPR032378">
    <property type="entry name" value="ZC3H15/TMA46_C"/>
</dbReference>
<dbReference type="PANTHER" id="PTHR12292">
    <property type="entry name" value="RWD DOMAIN-CONTAINING PROTEIN"/>
    <property type="match status" value="1"/>
</dbReference>
<dbReference type="Pfam" id="PF16543">
    <property type="entry name" value="DFRP_C"/>
    <property type="match status" value="1"/>
</dbReference>
<dbReference type="Pfam" id="PF05773">
    <property type="entry name" value="RWD"/>
    <property type="match status" value="1"/>
</dbReference>
<dbReference type="SMART" id="SM00591">
    <property type="entry name" value="RWD"/>
    <property type="match status" value="1"/>
</dbReference>
<dbReference type="SUPFAM" id="SSF54495">
    <property type="entry name" value="UBC-like"/>
    <property type="match status" value="1"/>
</dbReference>
<dbReference type="PROSITE" id="PS50908">
    <property type="entry name" value="RWD"/>
    <property type="match status" value="1"/>
</dbReference>